<gene>
    <name evidence="2" type="primary">rpsL</name>
    <name type="ordered locus">CGSHiEE_00055</name>
</gene>
<accession>A5U9Q8</accession>
<reference key="1">
    <citation type="journal article" date="2007" name="Genome Biol.">
        <title>Characterization and modeling of the Haemophilus influenzae core and supragenomes based on the complete genomic sequences of Rd and 12 clinical nontypeable strains.</title>
        <authorList>
            <person name="Hogg J.S."/>
            <person name="Hu F.Z."/>
            <person name="Janto B."/>
            <person name="Boissy R."/>
            <person name="Hayes J."/>
            <person name="Keefe R."/>
            <person name="Post J.C."/>
            <person name="Ehrlich G.D."/>
        </authorList>
    </citation>
    <scope>NUCLEOTIDE SEQUENCE [LARGE SCALE GENOMIC DNA]</scope>
    <source>
        <strain>PittEE</strain>
    </source>
</reference>
<proteinExistence type="inferred from homology"/>
<evidence type="ECO:0000250" key="1"/>
<evidence type="ECO:0000255" key="2">
    <source>
        <dbReference type="HAMAP-Rule" id="MF_00403"/>
    </source>
</evidence>
<evidence type="ECO:0000305" key="3"/>
<organism>
    <name type="scientific">Haemophilus influenzae (strain PittEE)</name>
    <dbReference type="NCBI Taxonomy" id="374930"/>
    <lineage>
        <taxon>Bacteria</taxon>
        <taxon>Pseudomonadati</taxon>
        <taxon>Pseudomonadota</taxon>
        <taxon>Gammaproteobacteria</taxon>
        <taxon>Pasteurellales</taxon>
        <taxon>Pasteurellaceae</taxon>
        <taxon>Haemophilus</taxon>
    </lineage>
</organism>
<protein>
    <recommendedName>
        <fullName evidence="2">Small ribosomal subunit protein uS12</fullName>
    </recommendedName>
    <alternativeName>
        <fullName evidence="3">30S ribosomal protein S12</fullName>
    </alternativeName>
</protein>
<keyword id="KW-0488">Methylation</keyword>
<keyword id="KW-0687">Ribonucleoprotein</keyword>
<keyword id="KW-0689">Ribosomal protein</keyword>
<keyword id="KW-0694">RNA-binding</keyword>
<keyword id="KW-0699">rRNA-binding</keyword>
<keyword id="KW-0820">tRNA-binding</keyword>
<feature type="chain" id="PRO_1000049786" description="Small ribosomal subunit protein uS12">
    <location>
        <begin position="1"/>
        <end position="124"/>
    </location>
</feature>
<feature type="modified residue" description="3-methylthioaspartic acid" evidence="1">
    <location>
        <position position="89"/>
    </location>
</feature>
<name>RS12_HAEIE</name>
<sequence>MATINQLVRKPRVKKVVKSNVPALEACPQKRGVCTRVYTTTPKKPNSALRKVCRIRLTNGFEVTSYIGGEGHNLQEHSVVLIRGGRVKDLPGVRYHTVRGALDCAGVKDRKQGRSKYGVKRPKA</sequence>
<dbReference type="EMBL" id="CP000671">
    <property type="protein sequence ID" value="ABQ97509.1"/>
    <property type="molecule type" value="Genomic_DNA"/>
</dbReference>
<dbReference type="SMR" id="A5U9Q8"/>
<dbReference type="KEGG" id="hip:CGSHiEE_00055"/>
<dbReference type="HOGENOM" id="CLU_104295_1_2_6"/>
<dbReference type="GO" id="GO:0015935">
    <property type="term" value="C:small ribosomal subunit"/>
    <property type="evidence" value="ECO:0007669"/>
    <property type="project" value="InterPro"/>
</dbReference>
<dbReference type="GO" id="GO:0019843">
    <property type="term" value="F:rRNA binding"/>
    <property type="evidence" value="ECO:0007669"/>
    <property type="project" value="UniProtKB-UniRule"/>
</dbReference>
<dbReference type="GO" id="GO:0003735">
    <property type="term" value="F:structural constituent of ribosome"/>
    <property type="evidence" value="ECO:0007669"/>
    <property type="project" value="InterPro"/>
</dbReference>
<dbReference type="GO" id="GO:0000049">
    <property type="term" value="F:tRNA binding"/>
    <property type="evidence" value="ECO:0007669"/>
    <property type="project" value="UniProtKB-UniRule"/>
</dbReference>
<dbReference type="GO" id="GO:0006412">
    <property type="term" value="P:translation"/>
    <property type="evidence" value="ECO:0007669"/>
    <property type="project" value="UniProtKB-UniRule"/>
</dbReference>
<dbReference type="CDD" id="cd03368">
    <property type="entry name" value="Ribosomal_S12"/>
    <property type="match status" value="1"/>
</dbReference>
<dbReference type="FunFam" id="2.40.50.140:FF:000001">
    <property type="entry name" value="30S ribosomal protein S12"/>
    <property type="match status" value="1"/>
</dbReference>
<dbReference type="Gene3D" id="2.40.50.140">
    <property type="entry name" value="Nucleic acid-binding proteins"/>
    <property type="match status" value="1"/>
</dbReference>
<dbReference type="HAMAP" id="MF_00403_B">
    <property type="entry name" value="Ribosomal_uS12_B"/>
    <property type="match status" value="1"/>
</dbReference>
<dbReference type="InterPro" id="IPR012340">
    <property type="entry name" value="NA-bd_OB-fold"/>
</dbReference>
<dbReference type="InterPro" id="IPR006032">
    <property type="entry name" value="Ribosomal_uS12"/>
</dbReference>
<dbReference type="InterPro" id="IPR005679">
    <property type="entry name" value="Ribosomal_uS12_bac"/>
</dbReference>
<dbReference type="NCBIfam" id="TIGR00981">
    <property type="entry name" value="rpsL_bact"/>
    <property type="match status" value="1"/>
</dbReference>
<dbReference type="PANTHER" id="PTHR11652">
    <property type="entry name" value="30S RIBOSOMAL PROTEIN S12 FAMILY MEMBER"/>
    <property type="match status" value="1"/>
</dbReference>
<dbReference type="Pfam" id="PF00164">
    <property type="entry name" value="Ribosom_S12_S23"/>
    <property type="match status" value="1"/>
</dbReference>
<dbReference type="PIRSF" id="PIRSF002133">
    <property type="entry name" value="Ribosomal_S12/S23"/>
    <property type="match status" value="1"/>
</dbReference>
<dbReference type="PRINTS" id="PR01034">
    <property type="entry name" value="RIBOSOMALS12"/>
</dbReference>
<dbReference type="SUPFAM" id="SSF50249">
    <property type="entry name" value="Nucleic acid-binding proteins"/>
    <property type="match status" value="1"/>
</dbReference>
<dbReference type="PROSITE" id="PS00055">
    <property type="entry name" value="RIBOSOMAL_S12"/>
    <property type="match status" value="1"/>
</dbReference>
<comment type="function">
    <text evidence="2">With S4 and S5 plays an important role in translational accuracy.</text>
</comment>
<comment type="function">
    <text evidence="2">Interacts with and stabilizes bases of the 16S rRNA that are involved in tRNA selection in the A site and with the mRNA backbone. Located at the interface of the 30S and 50S subunits, it traverses the body of the 30S subunit contacting proteins on the other side and probably holding the rRNA structure together. The combined cluster of proteins S8, S12 and S17 appears to hold together the shoulder and platform of the 30S subunit.</text>
</comment>
<comment type="subunit">
    <text evidence="2">Part of the 30S ribosomal subunit. Contacts proteins S8 and S17. May interact with IF1 in the 30S initiation complex.</text>
</comment>
<comment type="similarity">
    <text evidence="2">Belongs to the universal ribosomal protein uS12 family.</text>
</comment>